<proteinExistence type="inferred from homology"/>
<protein>
    <recommendedName>
        <fullName evidence="1">UDP-N-acetylmuramate--L-alanine ligase</fullName>
        <ecNumber evidence="1">6.3.2.8</ecNumber>
    </recommendedName>
    <alternativeName>
        <fullName evidence="1">UDP-N-acetylmuramoyl-L-alanine synthetase</fullName>
    </alternativeName>
</protein>
<evidence type="ECO:0000255" key="1">
    <source>
        <dbReference type="HAMAP-Rule" id="MF_00046"/>
    </source>
</evidence>
<comment type="function">
    <text evidence="1">Cell wall formation.</text>
</comment>
<comment type="catalytic activity">
    <reaction evidence="1">
        <text>UDP-N-acetyl-alpha-D-muramate + L-alanine + ATP = UDP-N-acetyl-alpha-D-muramoyl-L-alanine + ADP + phosphate + H(+)</text>
        <dbReference type="Rhea" id="RHEA:23372"/>
        <dbReference type="ChEBI" id="CHEBI:15378"/>
        <dbReference type="ChEBI" id="CHEBI:30616"/>
        <dbReference type="ChEBI" id="CHEBI:43474"/>
        <dbReference type="ChEBI" id="CHEBI:57972"/>
        <dbReference type="ChEBI" id="CHEBI:70757"/>
        <dbReference type="ChEBI" id="CHEBI:83898"/>
        <dbReference type="ChEBI" id="CHEBI:456216"/>
        <dbReference type="EC" id="6.3.2.8"/>
    </reaction>
</comment>
<comment type="pathway">
    <text evidence="1">Cell wall biogenesis; peptidoglycan biosynthesis.</text>
</comment>
<comment type="subcellular location">
    <subcellularLocation>
        <location evidence="1">Cytoplasm</location>
    </subcellularLocation>
</comment>
<comment type="similarity">
    <text evidence="1">Belongs to the MurCDEF family.</text>
</comment>
<reference key="1">
    <citation type="journal article" date="2002" name="Proc. Natl. Acad. Sci. U.S.A.">
        <title>Genome sequence of a serotype M3 strain of group A Streptococcus: phage-encoded toxins, the high-virulence phenotype, and clone emergence.</title>
        <authorList>
            <person name="Beres S.B."/>
            <person name="Sylva G.L."/>
            <person name="Barbian K.D."/>
            <person name="Lei B."/>
            <person name="Hoff J.S."/>
            <person name="Mammarella N.D."/>
            <person name="Liu M.-Y."/>
            <person name="Smoot J.C."/>
            <person name="Porcella S.F."/>
            <person name="Parkins L.D."/>
            <person name="Campbell D.S."/>
            <person name="Smith T.M."/>
            <person name="McCormick J.K."/>
            <person name="Leung D.Y.M."/>
            <person name="Schlievert P.M."/>
            <person name="Musser J.M."/>
        </authorList>
    </citation>
    <scope>NUCLEOTIDE SEQUENCE [LARGE SCALE GENOMIC DNA]</scope>
    <source>
        <strain>ATCC BAA-595 / MGAS315</strain>
    </source>
</reference>
<sequence length="442" mass="49622">MSKTYHFIGIKGSGMSALALMLHQMGHKVQGSDVEKYYFTQRGLEQAGITILPFSEDNITPDMELIVGNAFRENNKEVAYALRHQIPFKRYHDFLGDFMKSFISFAVAGAHGKTSTTGLLSHVLKNITDTSYLIGDGTGRGSANAQYFVFESDEYERHFMPYHPEYSIITNIDFDHPDYFTGIADVRNAFNDYAKQVKKALFVYGEDDELKKIEAPAPIYYYGFEEGNDFIAYDITRTTNGSDFKVKHQGEVIGQFHVPAYGKHNILNATAVIANLFVAGIDMALVADHLKTFSGVKRRFTEKIINDTIIIDDFAHHPTEIVATIDAARQKYPSKEIVAIFQPHTFTRTIALLEDFACALNEADSVYLAQIYGSAREVDKGEVRVEDLAAKIIKPSQVVTVENVSPLLDHDNAVYVFMGAGDIQLYEHSFEELLANLTKNNQ</sequence>
<feature type="chain" id="PRO_0000182169" description="UDP-N-acetylmuramate--L-alanine ligase">
    <location>
        <begin position="1"/>
        <end position="442"/>
    </location>
</feature>
<feature type="binding site" evidence="1">
    <location>
        <begin position="109"/>
        <end position="115"/>
    </location>
    <ligand>
        <name>ATP</name>
        <dbReference type="ChEBI" id="CHEBI:30616"/>
    </ligand>
</feature>
<accession>P0DC50</accession>
<accession>Q8K8J5</accession>
<dbReference type="EC" id="6.3.2.8" evidence="1"/>
<dbReference type="EMBL" id="AE014074">
    <property type="protein sequence ID" value="AAM78859.1"/>
    <property type="molecule type" value="Genomic_DNA"/>
</dbReference>
<dbReference type="RefSeq" id="WP_011054205.1">
    <property type="nucleotide sequence ID" value="NC_004070.1"/>
</dbReference>
<dbReference type="SMR" id="P0DC50"/>
<dbReference type="KEGG" id="spg:SpyM3_0252"/>
<dbReference type="HOGENOM" id="CLU_028104_1_0_9"/>
<dbReference type="UniPathway" id="UPA00219"/>
<dbReference type="Proteomes" id="UP000000564">
    <property type="component" value="Chromosome"/>
</dbReference>
<dbReference type="GO" id="GO:0005737">
    <property type="term" value="C:cytoplasm"/>
    <property type="evidence" value="ECO:0007669"/>
    <property type="project" value="UniProtKB-SubCell"/>
</dbReference>
<dbReference type="GO" id="GO:0005524">
    <property type="term" value="F:ATP binding"/>
    <property type="evidence" value="ECO:0007669"/>
    <property type="project" value="UniProtKB-UniRule"/>
</dbReference>
<dbReference type="GO" id="GO:0008763">
    <property type="term" value="F:UDP-N-acetylmuramate-L-alanine ligase activity"/>
    <property type="evidence" value="ECO:0007669"/>
    <property type="project" value="UniProtKB-UniRule"/>
</dbReference>
<dbReference type="GO" id="GO:0051301">
    <property type="term" value="P:cell division"/>
    <property type="evidence" value="ECO:0007669"/>
    <property type="project" value="UniProtKB-KW"/>
</dbReference>
<dbReference type="GO" id="GO:0071555">
    <property type="term" value="P:cell wall organization"/>
    <property type="evidence" value="ECO:0007669"/>
    <property type="project" value="UniProtKB-KW"/>
</dbReference>
<dbReference type="GO" id="GO:0009252">
    <property type="term" value="P:peptidoglycan biosynthetic process"/>
    <property type="evidence" value="ECO:0007669"/>
    <property type="project" value="UniProtKB-UniRule"/>
</dbReference>
<dbReference type="GO" id="GO:0008360">
    <property type="term" value="P:regulation of cell shape"/>
    <property type="evidence" value="ECO:0007669"/>
    <property type="project" value="UniProtKB-KW"/>
</dbReference>
<dbReference type="Gene3D" id="3.90.190.20">
    <property type="entry name" value="Mur ligase, C-terminal domain"/>
    <property type="match status" value="1"/>
</dbReference>
<dbReference type="Gene3D" id="3.40.1190.10">
    <property type="entry name" value="Mur-like, catalytic domain"/>
    <property type="match status" value="1"/>
</dbReference>
<dbReference type="Gene3D" id="3.40.50.720">
    <property type="entry name" value="NAD(P)-binding Rossmann-like Domain"/>
    <property type="match status" value="1"/>
</dbReference>
<dbReference type="HAMAP" id="MF_00046">
    <property type="entry name" value="MurC"/>
    <property type="match status" value="1"/>
</dbReference>
<dbReference type="InterPro" id="IPR036565">
    <property type="entry name" value="Mur-like_cat_sf"/>
</dbReference>
<dbReference type="InterPro" id="IPR004101">
    <property type="entry name" value="Mur_ligase_C"/>
</dbReference>
<dbReference type="InterPro" id="IPR036615">
    <property type="entry name" value="Mur_ligase_C_dom_sf"/>
</dbReference>
<dbReference type="InterPro" id="IPR013221">
    <property type="entry name" value="Mur_ligase_cen"/>
</dbReference>
<dbReference type="InterPro" id="IPR000713">
    <property type="entry name" value="Mur_ligase_N"/>
</dbReference>
<dbReference type="InterPro" id="IPR050061">
    <property type="entry name" value="MurCDEF_pg_biosynth"/>
</dbReference>
<dbReference type="InterPro" id="IPR005758">
    <property type="entry name" value="UDP-N-AcMur_Ala_ligase_MurC"/>
</dbReference>
<dbReference type="NCBIfam" id="TIGR01082">
    <property type="entry name" value="murC"/>
    <property type="match status" value="1"/>
</dbReference>
<dbReference type="PANTHER" id="PTHR43445:SF3">
    <property type="entry name" value="UDP-N-ACETYLMURAMATE--L-ALANINE LIGASE"/>
    <property type="match status" value="1"/>
</dbReference>
<dbReference type="PANTHER" id="PTHR43445">
    <property type="entry name" value="UDP-N-ACETYLMURAMATE--L-ALANINE LIGASE-RELATED"/>
    <property type="match status" value="1"/>
</dbReference>
<dbReference type="Pfam" id="PF01225">
    <property type="entry name" value="Mur_ligase"/>
    <property type="match status" value="1"/>
</dbReference>
<dbReference type="Pfam" id="PF02875">
    <property type="entry name" value="Mur_ligase_C"/>
    <property type="match status" value="1"/>
</dbReference>
<dbReference type="Pfam" id="PF08245">
    <property type="entry name" value="Mur_ligase_M"/>
    <property type="match status" value="1"/>
</dbReference>
<dbReference type="SUPFAM" id="SSF51984">
    <property type="entry name" value="MurCD N-terminal domain"/>
    <property type="match status" value="1"/>
</dbReference>
<dbReference type="SUPFAM" id="SSF53623">
    <property type="entry name" value="MurD-like peptide ligases, catalytic domain"/>
    <property type="match status" value="1"/>
</dbReference>
<dbReference type="SUPFAM" id="SSF53244">
    <property type="entry name" value="MurD-like peptide ligases, peptide-binding domain"/>
    <property type="match status" value="1"/>
</dbReference>
<organism>
    <name type="scientific">Streptococcus pyogenes serotype M3 (strain ATCC BAA-595 / MGAS315)</name>
    <dbReference type="NCBI Taxonomy" id="198466"/>
    <lineage>
        <taxon>Bacteria</taxon>
        <taxon>Bacillati</taxon>
        <taxon>Bacillota</taxon>
        <taxon>Bacilli</taxon>
        <taxon>Lactobacillales</taxon>
        <taxon>Streptococcaceae</taxon>
        <taxon>Streptococcus</taxon>
    </lineage>
</organism>
<keyword id="KW-0067">ATP-binding</keyword>
<keyword id="KW-0131">Cell cycle</keyword>
<keyword id="KW-0132">Cell division</keyword>
<keyword id="KW-0133">Cell shape</keyword>
<keyword id="KW-0961">Cell wall biogenesis/degradation</keyword>
<keyword id="KW-0963">Cytoplasm</keyword>
<keyword id="KW-0436">Ligase</keyword>
<keyword id="KW-0547">Nucleotide-binding</keyword>
<keyword id="KW-0573">Peptidoglycan synthesis</keyword>
<gene>
    <name evidence="1" type="primary">murC</name>
    <name type="ordered locus">SpyM3_0252</name>
</gene>
<name>MURC_STRP3</name>